<comment type="function">
    <text evidence="4">May stop tail tube polymerization by capping the rapidly polymerizing tail tube once it has reached its requisite length and prevent its depolymerization.</text>
</comment>
<comment type="subcellular location">
    <subcellularLocation>
        <location evidence="3">Virion</location>
    </subcellularLocation>
    <subcellularLocation>
        <location evidence="3">Host cytoplasm</location>
    </subcellularLocation>
    <text evidence="3">Tail.</text>
</comment>
<comment type="induction">
    <text evidence="2">Expressed in the late phase of the viral replicative cycle. Expression of late genes is activated by the viral late transcription activator C.</text>
</comment>
<comment type="disruption phenotype">
    <text evidence="1">Accumulation of free heads as well as free tails longer than normal and variable in length.</text>
</comment>
<organismHost>
    <name type="scientific">Enterobacteriaceae</name>
    <dbReference type="NCBI Taxonomy" id="543"/>
</organismHost>
<feature type="chain" id="PRO_0000077830" description="Probable tail terminator protein">
    <location>
        <begin position="1"/>
        <end position="182"/>
    </location>
</feature>
<keyword id="KW-0002">3D-structure</keyword>
<keyword id="KW-1035">Host cytoplasm</keyword>
<keyword id="KW-0426">Late protein</keyword>
<keyword id="KW-1185">Reference proteome</keyword>
<keyword id="KW-1188">Viral release from host cell</keyword>
<keyword id="KW-1245">Viral tail assembly</keyword>
<keyword id="KW-1227">Viral tail protein</keyword>
<keyword id="KW-0946">Virion</keyword>
<protein>
    <recommendedName>
        <fullName>Probable tail terminator protein</fullName>
        <shortName>TrP</shortName>
    </recommendedName>
    <alternativeName>
        <fullName>Gene product 37</fullName>
        <shortName>gp37</shortName>
    </alternativeName>
    <alternativeName>
        <fullName>Gene product K</fullName>
        <shortName>gpK</shortName>
    </alternativeName>
</protein>
<reference key="1">
    <citation type="journal article" date="2002" name="J. Mol. Biol.">
        <title>Bacteriophage Mu genome sequence: analysis and comparison with Mu-like prophages in Haemophilus, Neisseria and Deinococcus.</title>
        <authorList>
            <person name="Morgan G.J."/>
            <person name="Hatfull G.F."/>
            <person name="Casjens S."/>
            <person name="Hendrix R.W."/>
        </authorList>
    </citation>
    <scope>NUCLEOTIDE SEQUENCE [LARGE SCALE GENOMIC DNA]</scope>
</reference>
<reference key="2">
    <citation type="journal article" date="1985" name="Virology">
        <title>Morphogenetic structures present in lysates of amber mutants of bacteriophage Mu.</title>
        <authorList>
            <person name="Grundy F.J."/>
            <person name="Howe M.M."/>
        </authorList>
    </citation>
    <scope>DISRUPTION PHENOTYPE</scope>
</reference>
<reference key="3">
    <citation type="journal article" date="1993" name="Genetics">
        <title>Mutational analysis of a C-dependent late promoter of bacteriophage Mu.</title>
        <authorList>
            <person name="Chiang L.W."/>
            <person name="Howe M.M."/>
        </authorList>
    </citation>
    <scope>INDUCTION</scope>
</reference>
<reference key="4">
    <citation type="journal article" date="2010" name="FEMS Microbiol. Lett.">
        <title>Identification of the J and K genes in the bacteriophage Mu genome sequence.</title>
        <authorList>
            <person name="Smith M.L."/>
            <person name="Avanigadda L.N."/>
            <person name="Liddell P.W."/>
            <person name="Kenwright K.M."/>
            <person name="Howe M.M."/>
        </authorList>
    </citation>
    <scope>IDENTIFICATION</scope>
</reference>
<reference key="5">
    <citation type="journal article" date="2009" name="J. Mol. Biol.">
        <title>The X-ray crystal structure of the phage lambda tail terminator protein reveals the biologically relevant hexameric ring structure and demonstrates a conserved mechanism of tail termination among diverse long-tailed phages.</title>
        <authorList>
            <person name="Pell L.G."/>
            <person name="Liu A."/>
            <person name="Edmonds L."/>
            <person name="Donaldson L.W."/>
            <person name="Howell P.L."/>
            <person name="Davidson A.R."/>
        </authorList>
    </citation>
    <scope>FUNCTION</scope>
</reference>
<reference key="6">
    <citation type="journal article" date="2012" name="Adv. Exp. Med. Biol.">
        <title>Contractile tail machines of bacteriophages.</title>
        <authorList>
            <person name="Leiman P.G."/>
            <person name="Shneider M.M."/>
        </authorList>
    </citation>
    <scope>REVIEW</scope>
</reference>
<organism>
    <name type="scientific">Escherichia phage Mu</name>
    <name type="common">Bacteriophage Mu</name>
    <dbReference type="NCBI Taxonomy" id="2681603"/>
    <lineage>
        <taxon>Viruses</taxon>
        <taxon>Duplodnaviria</taxon>
        <taxon>Heunggongvirae</taxon>
        <taxon>Uroviricota</taxon>
        <taxon>Caudoviricetes</taxon>
        <taxon>Muvirus</taxon>
        <taxon>Muvirus mu</taxon>
    </lineage>
</organism>
<evidence type="ECO:0000269" key="1">
    <source>
    </source>
</evidence>
<evidence type="ECO:0000269" key="2">
    <source>
    </source>
</evidence>
<evidence type="ECO:0000305" key="3"/>
<evidence type="ECO:0000305" key="4">
    <source>
    </source>
</evidence>
<proteinExistence type="evidence at protein level"/>
<accession>Q9T1V8</accession>
<gene>
    <name type="ordered locus">Mup37</name>
</gene>
<dbReference type="EMBL" id="AF083977">
    <property type="protein sequence ID" value="AAF01115.1"/>
    <property type="molecule type" value="Genomic_DNA"/>
</dbReference>
<dbReference type="RefSeq" id="NP_050641.1">
    <property type="nucleotide sequence ID" value="NC_000929.1"/>
</dbReference>
<dbReference type="PDB" id="9KHY">
    <property type="method" value="EM"/>
    <property type="resolution" value="3.40 A"/>
    <property type="chains" value="1/2/3/4/5/6=1-182"/>
</dbReference>
<dbReference type="PDB" id="9LJ8">
    <property type="method" value="EM"/>
    <property type="resolution" value="3.80 A"/>
    <property type="chains" value="A/B/C/D/E/F=1-182"/>
</dbReference>
<dbReference type="PDBsum" id="9KHY"/>
<dbReference type="PDBsum" id="9LJ8"/>
<dbReference type="EMDB" id="EMD-62359"/>
<dbReference type="EMDB" id="EMD-63137"/>
<dbReference type="GeneID" id="2636286"/>
<dbReference type="KEGG" id="vg:2636286"/>
<dbReference type="Proteomes" id="UP000002611">
    <property type="component" value="Genome"/>
</dbReference>
<dbReference type="GO" id="GO:0030430">
    <property type="term" value="C:host cell cytoplasm"/>
    <property type="evidence" value="ECO:0007669"/>
    <property type="project" value="UniProtKB-SubCell"/>
</dbReference>
<dbReference type="GO" id="GO:0098015">
    <property type="term" value="C:virus tail"/>
    <property type="evidence" value="ECO:0007669"/>
    <property type="project" value="UniProtKB-KW"/>
</dbReference>
<dbReference type="GO" id="GO:0098003">
    <property type="term" value="P:viral tail assembly"/>
    <property type="evidence" value="ECO:0007669"/>
    <property type="project" value="UniProtKB-KW"/>
</dbReference>
<dbReference type="InterPro" id="IPR014972">
    <property type="entry name" value="Phage_Mu_Gp37"/>
</dbReference>
<dbReference type="Pfam" id="PF08873">
    <property type="entry name" value="Phage_Mu_Gp37"/>
    <property type="match status" value="1"/>
</dbReference>
<sequence>MLEETEAALLARVRELFGATLRQVEPLTGTWTNEDVHRLFLAPPSVFLAWMGCGEGRTRREVESRWAFFVVAELLNGEPVNRPGIYQIVERLIAGVNGQTFGPTTGMRLTQVRNLCDDNRINAGVVLYGVLFSGTTPLPSVVDLDSLDDYERHWQTWKFPDETPEFAAHINVNQEKDHDAEN</sequence>
<name>TRP_BPMU</name>